<dbReference type="EC" id="3.1.-.-" evidence="1"/>
<dbReference type="EMBL" id="CP000685">
    <property type="protein sequence ID" value="ABQ05555.1"/>
    <property type="molecule type" value="Genomic_DNA"/>
</dbReference>
<dbReference type="RefSeq" id="WP_012024594.1">
    <property type="nucleotide sequence ID" value="NC_009441.1"/>
</dbReference>
<dbReference type="SMR" id="A5FGX1"/>
<dbReference type="STRING" id="376686.Fjoh_2528"/>
<dbReference type="KEGG" id="fjo:Fjoh_2528"/>
<dbReference type="eggNOG" id="COG0816">
    <property type="taxonomic scope" value="Bacteria"/>
</dbReference>
<dbReference type="HOGENOM" id="CLU_098240_2_1_10"/>
<dbReference type="OrthoDB" id="9796140at2"/>
<dbReference type="Proteomes" id="UP000006694">
    <property type="component" value="Chromosome"/>
</dbReference>
<dbReference type="GO" id="GO:0005829">
    <property type="term" value="C:cytosol"/>
    <property type="evidence" value="ECO:0007669"/>
    <property type="project" value="TreeGrafter"/>
</dbReference>
<dbReference type="GO" id="GO:0004518">
    <property type="term" value="F:nuclease activity"/>
    <property type="evidence" value="ECO:0007669"/>
    <property type="project" value="UniProtKB-KW"/>
</dbReference>
<dbReference type="GO" id="GO:0000967">
    <property type="term" value="P:rRNA 5'-end processing"/>
    <property type="evidence" value="ECO:0007669"/>
    <property type="project" value="UniProtKB-UniRule"/>
</dbReference>
<dbReference type="CDD" id="cd16964">
    <property type="entry name" value="YqgF"/>
    <property type="match status" value="1"/>
</dbReference>
<dbReference type="Gene3D" id="3.30.420.140">
    <property type="entry name" value="YqgF/RNase H-like domain"/>
    <property type="match status" value="1"/>
</dbReference>
<dbReference type="HAMAP" id="MF_00651">
    <property type="entry name" value="Nuclease_YqgF"/>
    <property type="match status" value="1"/>
</dbReference>
<dbReference type="InterPro" id="IPR012337">
    <property type="entry name" value="RNaseH-like_sf"/>
</dbReference>
<dbReference type="InterPro" id="IPR005227">
    <property type="entry name" value="YqgF"/>
</dbReference>
<dbReference type="InterPro" id="IPR006641">
    <property type="entry name" value="YqgF/RNaseH-like_dom"/>
</dbReference>
<dbReference type="InterPro" id="IPR037027">
    <property type="entry name" value="YqgF/RNaseH-like_dom_sf"/>
</dbReference>
<dbReference type="NCBIfam" id="TIGR00250">
    <property type="entry name" value="RNAse_H_YqgF"/>
    <property type="match status" value="1"/>
</dbReference>
<dbReference type="PANTHER" id="PTHR33317">
    <property type="entry name" value="POLYNUCLEOTIDYL TRANSFERASE, RIBONUCLEASE H-LIKE SUPERFAMILY PROTEIN"/>
    <property type="match status" value="1"/>
</dbReference>
<dbReference type="PANTHER" id="PTHR33317:SF4">
    <property type="entry name" value="POLYNUCLEOTIDYL TRANSFERASE, RIBONUCLEASE H-LIKE SUPERFAMILY PROTEIN"/>
    <property type="match status" value="1"/>
</dbReference>
<dbReference type="Pfam" id="PF03652">
    <property type="entry name" value="RuvX"/>
    <property type="match status" value="1"/>
</dbReference>
<dbReference type="SMART" id="SM00732">
    <property type="entry name" value="YqgFc"/>
    <property type="match status" value="1"/>
</dbReference>
<dbReference type="SUPFAM" id="SSF53098">
    <property type="entry name" value="Ribonuclease H-like"/>
    <property type="match status" value="1"/>
</dbReference>
<gene>
    <name type="ordered locus">Fjoh_2528</name>
</gene>
<evidence type="ECO:0000255" key="1">
    <source>
        <dbReference type="HAMAP-Rule" id="MF_00651"/>
    </source>
</evidence>
<name>YQGF_FLAJ1</name>
<keyword id="KW-0963">Cytoplasm</keyword>
<keyword id="KW-0378">Hydrolase</keyword>
<keyword id="KW-0540">Nuclease</keyword>
<keyword id="KW-0690">Ribosome biogenesis</keyword>
<feature type="chain" id="PRO_1000082744" description="Putative pre-16S rRNA nuclease">
    <location>
        <begin position="1"/>
        <end position="138"/>
    </location>
</feature>
<comment type="function">
    <text evidence="1">Could be a nuclease involved in processing of the 5'-end of pre-16S rRNA.</text>
</comment>
<comment type="subcellular location">
    <subcellularLocation>
        <location evidence="1">Cytoplasm</location>
    </subcellularLocation>
</comment>
<comment type="similarity">
    <text evidence="1">Belongs to the YqgF nuclease family.</text>
</comment>
<reference key="1">
    <citation type="journal article" date="2009" name="Appl. Environ. Microbiol.">
        <title>Novel features of the polysaccharide-digesting gliding bacterium Flavobacterium johnsoniae as revealed by genome sequence analysis.</title>
        <authorList>
            <person name="McBride M.J."/>
            <person name="Xie G."/>
            <person name="Martens E.C."/>
            <person name="Lapidus A."/>
            <person name="Henrissat B."/>
            <person name="Rhodes R.G."/>
            <person name="Goltsman E."/>
            <person name="Wang W."/>
            <person name="Xu J."/>
            <person name="Hunnicutt D.W."/>
            <person name="Staroscik A.M."/>
            <person name="Hoover T.R."/>
            <person name="Cheng Y.Q."/>
            <person name="Stein J.L."/>
        </authorList>
    </citation>
    <scope>NUCLEOTIDE SEQUENCE [LARGE SCALE GENOMIC DNA]</scope>
    <source>
        <strain>ATCC 17061 / DSM 2064 / JCM 8514 / BCRC 14874 / CCUG 350202 / NBRC 14942 / NCIMB 11054 / UW101</strain>
    </source>
</reference>
<protein>
    <recommendedName>
        <fullName evidence="1">Putative pre-16S rRNA nuclease</fullName>
        <ecNumber evidence="1">3.1.-.-</ecNumber>
    </recommendedName>
</protein>
<sequence length="138" mass="15551">MPRILSIDYGQKRTGIAVTDEMQIIASGLTTIPTHTLIDFLKDYFAKEKVEAVLIGEPKQMNGQPSESASVINGFVTHFSNIFPDMKVIRVDERFTSKMAFQTMLDSGLSKKQRQNKGLIDEISATIMLQDYLSSKRF</sequence>
<proteinExistence type="inferred from homology"/>
<organism>
    <name type="scientific">Flavobacterium johnsoniae (strain ATCC 17061 / DSM 2064 / JCM 8514 / BCRC 14874 / CCUG 350202 / NBRC 14942 / NCIMB 11054 / UW101)</name>
    <name type="common">Cytophaga johnsonae</name>
    <dbReference type="NCBI Taxonomy" id="376686"/>
    <lineage>
        <taxon>Bacteria</taxon>
        <taxon>Pseudomonadati</taxon>
        <taxon>Bacteroidota</taxon>
        <taxon>Flavobacteriia</taxon>
        <taxon>Flavobacteriales</taxon>
        <taxon>Flavobacteriaceae</taxon>
        <taxon>Flavobacterium</taxon>
    </lineage>
</organism>
<accession>A5FGX1</accession>